<evidence type="ECO:0000255" key="1">
    <source>
        <dbReference type="HAMAP-Rule" id="MF_00318"/>
    </source>
</evidence>
<dbReference type="EC" id="4.2.1.11" evidence="1"/>
<dbReference type="EMBL" id="CP000896">
    <property type="protein sequence ID" value="ABX81023.1"/>
    <property type="molecule type" value="Genomic_DNA"/>
</dbReference>
<dbReference type="RefSeq" id="WP_012242354.1">
    <property type="nucleotide sequence ID" value="NC_010163.1"/>
</dbReference>
<dbReference type="SMR" id="A9NF93"/>
<dbReference type="STRING" id="441768.ACL_0402"/>
<dbReference type="GeneID" id="41338584"/>
<dbReference type="KEGG" id="acl:ACL_0402"/>
<dbReference type="eggNOG" id="COG0148">
    <property type="taxonomic scope" value="Bacteria"/>
</dbReference>
<dbReference type="HOGENOM" id="CLU_031223_2_1_14"/>
<dbReference type="OrthoDB" id="9804716at2"/>
<dbReference type="UniPathway" id="UPA00109">
    <property type="reaction ID" value="UER00187"/>
</dbReference>
<dbReference type="Proteomes" id="UP000008558">
    <property type="component" value="Chromosome"/>
</dbReference>
<dbReference type="GO" id="GO:0009986">
    <property type="term" value="C:cell surface"/>
    <property type="evidence" value="ECO:0007669"/>
    <property type="project" value="UniProtKB-SubCell"/>
</dbReference>
<dbReference type="GO" id="GO:0005576">
    <property type="term" value="C:extracellular region"/>
    <property type="evidence" value="ECO:0007669"/>
    <property type="project" value="UniProtKB-SubCell"/>
</dbReference>
<dbReference type="GO" id="GO:0000015">
    <property type="term" value="C:phosphopyruvate hydratase complex"/>
    <property type="evidence" value="ECO:0007669"/>
    <property type="project" value="InterPro"/>
</dbReference>
<dbReference type="GO" id="GO:0000287">
    <property type="term" value="F:magnesium ion binding"/>
    <property type="evidence" value="ECO:0007669"/>
    <property type="project" value="UniProtKB-UniRule"/>
</dbReference>
<dbReference type="GO" id="GO:0004634">
    <property type="term" value="F:phosphopyruvate hydratase activity"/>
    <property type="evidence" value="ECO:0007669"/>
    <property type="project" value="UniProtKB-UniRule"/>
</dbReference>
<dbReference type="GO" id="GO:0006096">
    <property type="term" value="P:glycolytic process"/>
    <property type="evidence" value="ECO:0007669"/>
    <property type="project" value="UniProtKB-UniRule"/>
</dbReference>
<dbReference type="CDD" id="cd03313">
    <property type="entry name" value="enolase"/>
    <property type="match status" value="1"/>
</dbReference>
<dbReference type="FunFam" id="3.20.20.120:FF:000001">
    <property type="entry name" value="Enolase"/>
    <property type="match status" value="1"/>
</dbReference>
<dbReference type="FunFam" id="3.30.390.10:FF:000001">
    <property type="entry name" value="Enolase"/>
    <property type="match status" value="1"/>
</dbReference>
<dbReference type="Gene3D" id="3.20.20.120">
    <property type="entry name" value="Enolase-like C-terminal domain"/>
    <property type="match status" value="1"/>
</dbReference>
<dbReference type="Gene3D" id="3.30.390.10">
    <property type="entry name" value="Enolase-like, N-terminal domain"/>
    <property type="match status" value="1"/>
</dbReference>
<dbReference type="HAMAP" id="MF_00318">
    <property type="entry name" value="Enolase"/>
    <property type="match status" value="1"/>
</dbReference>
<dbReference type="InterPro" id="IPR000941">
    <property type="entry name" value="Enolase"/>
</dbReference>
<dbReference type="InterPro" id="IPR036849">
    <property type="entry name" value="Enolase-like_C_sf"/>
</dbReference>
<dbReference type="InterPro" id="IPR029017">
    <property type="entry name" value="Enolase-like_N"/>
</dbReference>
<dbReference type="InterPro" id="IPR020810">
    <property type="entry name" value="Enolase_C"/>
</dbReference>
<dbReference type="InterPro" id="IPR020809">
    <property type="entry name" value="Enolase_CS"/>
</dbReference>
<dbReference type="InterPro" id="IPR020811">
    <property type="entry name" value="Enolase_N"/>
</dbReference>
<dbReference type="NCBIfam" id="TIGR01060">
    <property type="entry name" value="eno"/>
    <property type="match status" value="1"/>
</dbReference>
<dbReference type="PANTHER" id="PTHR11902">
    <property type="entry name" value="ENOLASE"/>
    <property type="match status" value="1"/>
</dbReference>
<dbReference type="PANTHER" id="PTHR11902:SF1">
    <property type="entry name" value="ENOLASE"/>
    <property type="match status" value="1"/>
</dbReference>
<dbReference type="Pfam" id="PF00113">
    <property type="entry name" value="Enolase_C"/>
    <property type="match status" value="1"/>
</dbReference>
<dbReference type="Pfam" id="PF03952">
    <property type="entry name" value="Enolase_N"/>
    <property type="match status" value="1"/>
</dbReference>
<dbReference type="PIRSF" id="PIRSF001400">
    <property type="entry name" value="Enolase"/>
    <property type="match status" value="1"/>
</dbReference>
<dbReference type="PRINTS" id="PR00148">
    <property type="entry name" value="ENOLASE"/>
</dbReference>
<dbReference type="SFLD" id="SFLDS00001">
    <property type="entry name" value="Enolase"/>
    <property type="match status" value="1"/>
</dbReference>
<dbReference type="SFLD" id="SFLDF00002">
    <property type="entry name" value="enolase"/>
    <property type="match status" value="1"/>
</dbReference>
<dbReference type="SMART" id="SM01192">
    <property type="entry name" value="Enolase_C"/>
    <property type="match status" value="1"/>
</dbReference>
<dbReference type="SMART" id="SM01193">
    <property type="entry name" value="Enolase_N"/>
    <property type="match status" value="1"/>
</dbReference>
<dbReference type="SUPFAM" id="SSF51604">
    <property type="entry name" value="Enolase C-terminal domain-like"/>
    <property type="match status" value="1"/>
</dbReference>
<dbReference type="SUPFAM" id="SSF54826">
    <property type="entry name" value="Enolase N-terminal domain-like"/>
    <property type="match status" value="1"/>
</dbReference>
<dbReference type="PROSITE" id="PS00164">
    <property type="entry name" value="ENOLASE"/>
    <property type="match status" value="1"/>
</dbReference>
<reference key="1">
    <citation type="journal article" date="2011" name="J. Bacteriol.">
        <title>Complete genome and proteome of Acholeplasma laidlawii.</title>
        <authorList>
            <person name="Lazarev V.N."/>
            <person name="Levitskii S.A."/>
            <person name="Basovskii Y.I."/>
            <person name="Chukin M.M."/>
            <person name="Akopian T.A."/>
            <person name="Vereshchagin V.V."/>
            <person name="Kostrjukova E.S."/>
            <person name="Kovaleva G.Y."/>
            <person name="Kazanov M.D."/>
            <person name="Malko D.B."/>
            <person name="Vitreschak A.G."/>
            <person name="Sernova N.V."/>
            <person name="Gelfand M.S."/>
            <person name="Demina I.A."/>
            <person name="Serebryakova M.V."/>
            <person name="Galyamina M.A."/>
            <person name="Vtyurin N.N."/>
            <person name="Rogov S.I."/>
            <person name="Alexeev D.G."/>
            <person name="Ladygina V.G."/>
            <person name="Govorun V.M."/>
        </authorList>
    </citation>
    <scope>NUCLEOTIDE SEQUENCE [LARGE SCALE GENOMIC DNA]</scope>
    <source>
        <strain>PG-8A</strain>
    </source>
</reference>
<feature type="chain" id="PRO_1000079120" description="Enolase">
    <location>
        <begin position="1"/>
        <end position="431"/>
    </location>
</feature>
<feature type="active site" description="Proton donor" evidence="1">
    <location>
        <position position="205"/>
    </location>
</feature>
<feature type="active site" description="Proton acceptor" evidence="1">
    <location>
        <position position="340"/>
    </location>
</feature>
<feature type="binding site" evidence="1">
    <location>
        <position position="163"/>
    </location>
    <ligand>
        <name>(2R)-2-phosphoglycerate</name>
        <dbReference type="ChEBI" id="CHEBI:58289"/>
    </ligand>
</feature>
<feature type="binding site" evidence="1">
    <location>
        <position position="242"/>
    </location>
    <ligand>
        <name>Mg(2+)</name>
        <dbReference type="ChEBI" id="CHEBI:18420"/>
    </ligand>
</feature>
<feature type="binding site" evidence="1">
    <location>
        <position position="288"/>
    </location>
    <ligand>
        <name>Mg(2+)</name>
        <dbReference type="ChEBI" id="CHEBI:18420"/>
    </ligand>
</feature>
<feature type="binding site" evidence="1">
    <location>
        <position position="315"/>
    </location>
    <ligand>
        <name>Mg(2+)</name>
        <dbReference type="ChEBI" id="CHEBI:18420"/>
    </ligand>
</feature>
<feature type="binding site" evidence="1">
    <location>
        <position position="340"/>
    </location>
    <ligand>
        <name>(2R)-2-phosphoglycerate</name>
        <dbReference type="ChEBI" id="CHEBI:58289"/>
    </ligand>
</feature>
<feature type="binding site" evidence="1">
    <location>
        <position position="369"/>
    </location>
    <ligand>
        <name>(2R)-2-phosphoglycerate</name>
        <dbReference type="ChEBI" id="CHEBI:58289"/>
    </ligand>
</feature>
<feature type="binding site" evidence="1">
    <location>
        <position position="370"/>
    </location>
    <ligand>
        <name>(2R)-2-phosphoglycerate</name>
        <dbReference type="ChEBI" id="CHEBI:58289"/>
    </ligand>
</feature>
<feature type="binding site" evidence="1">
    <location>
        <position position="391"/>
    </location>
    <ligand>
        <name>(2R)-2-phosphoglycerate</name>
        <dbReference type="ChEBI" id="CHEBI:58289"/>
    </ligand>
</feature>
<comment type="function">
    <text evidence="1">Catalyzes the reversible conversion of 2-phosphoglycerate (2-PG) into phosphoenolpyruvate (PEP). It is essential for the degradation of carbohydrates via glycolysis.</text>
</comment>
<comment type="catalytic activity">
    <reaction evidence="1">
        <text>(2R)-2-phosphoglycerate = phosphoenolpyruvate + H2O</text>
        <dbReference type="Rhea" id="RHEA:10164"/>
        <dbReference type="ChEBI" id="CHEBI:15377"/>
        <dbReference type="ChEBI" id="CHEBI:58289"/>
        <dbReference type="ChEBI" id="CHEBI:58702"/>
        <dbReference type="EC" id="4.2.1.11"/>
    </reaction>
</comment>
<comment type="cofactor">
    <cofactor evidence="1">
        <name>Mg(2+)</name>
        <dbReference type="ChEBI" id="CHEBI:18420"/>
    </cofactor>
    <text evidence="1">Binds a second Mg(2+) ion via substrate during catalysis.</text>
</comment>
<comment type="pathway">
    <text evidence="1">Carbohydrate degradation; glycolysis; pyruvate from D-glyceraldehyde 3-phosphate: step 4/5.</text>
</comment>
<comment type="subcellular location">
    <subcellularLocation>
        <location evidence="1">Cytoplasm</location>
    </subcellularLocation>
    <subcellularLocation>
        <location evidence="1">Secreted</location>
    </subcellularLocation>
    <subcellularLocation>
        <location evidence="1">Cell surface</location>
    </subcellularLocation>
    <text evidence="1">Fractions of enolase are present in both the cytoplasm and on the cell surface.</text>
</comment>
<comment type="similarity">
    <text evidence="1">Belongs to the enolase family.</text>
</comment>
<protein>
    <recommendedName>
        <fullName evidence="1">Enolase</fullName>
        <ecNumber evidence="1">4.2.1.11</ecNumber>
    </recommendedName>
    <alternativeName>
        <fullName evidence="1">2-phospho-D-glycerate hydro-lyase</fullName>
    </alternativeName>
    <alternativeName>
        <fullName evidence="1">2-phosphoglycerate dehydratase</fullName>
    </alternativeName>
</protein>
<keyword id="KW-0963">Cytoplasm</keyword>
<keyword id="KW-0324">Glycolysis</keyword>
<keyword id="KW-0456">Lyase</keyword>
<keyword id="KW-0460">Magnesium</keyword>
<keyword id="KW-0479">Metal-binding</keyword>
<keyword id="KW-1185">Reference proteome</keyword>
<keyword id="KW-0964">Secreted</keyword>
<proteinExistence type="inferred from homology"/>
<sequence length="431" mass="46517">MPFITSVYAREVLDSRGNPTVEVEIVTDSGAFGRTLVPSGASTGEHEAVELRDGDKSRYLGKGVLKAVENVNDIIGPAILGDSVLDQVALDRKLIALDGTKNKGKLGANAILGVSIAAAKAAADLLNLELYQYLGGFNAKQLPVPMMNIINGGAHSDAPIDFQEFMIFPVGAPSFKEAIRWGAEIFHALKAILKKKGLSTAVGDEGGFAPNLASNEDTIDNILEAIKNAGYKAGEEVFIGFDVAASEFFDKAKGKYVFKKSTKEEFTSAELVEYYAGLVQKYPIISIEDGMDENDWDGWKLLTDKLGSKIQLVGDDLFVTNTEYLARGIKTNTANSILVKVNQIGTLTETFDAIEMAKRAGYTAVISHRSGETEDTTIADIAVAANTGQIKTGSASRTDRVAKYNQLMRIEDQLGEDAVYLGKDSFYNLKK</sequence>
<organism>
    <name type="scientific">Acholeplasma laidlawii (strain PG-8A)</name>
    <dbReference type="NCBI Taxonomy" id="441768"/>
    <lineage>
        <taxon>Bacteria</taxon>
        <taxon>Bacillati</taxon>
        <taxon>Mycoplasmatota</taxon>
        <taxon>Mollicutes</taxon>
        <taxon>Acholeplasmatales</taxon>
        <taxon>Acholeplasmataceae</taxon>
        <taxon>Acholeplasma</taxon>
    </lineage>
</organism>
<name>ENO_ACHLI</name>
<gene>
    <name evidence="1" type="primary">eno</name>
    <name type="ordered locus">ACL_0402</name>
</gene>
<accession>A9NF93</accession>